<organism>
    <name type="scientific">Homo sapiens</name>
    <name type="common">Human</name>
    <dbReference type="NCBI Taxonomy" id="9606"/>
    <lineage>
        <taxon>Eukaryota</taxon>
        <taxon>Metazoa</taxon>
        <taxon>Chordata</taxon>
        <taxon>Craniata</taxon>
        <taxon>Vertebrata</taxon>
        <taxon>Euteleostomi</taxon>
        <taxon>Mammalia</taxon>
        <taxon>Eutheria</taxon>
        <taxon>Euarchontoglires</taxon>
        <taxon>Primates</taxon>
        <taxon>Haplorrhini</taxon>
        <taxon>Catarrhini</taxon>
        <taxon>Hominidae</taxon>
        <taxon>Homo</taxon>
    </lineage>
</organism>
<name>ZDH17_HUMAN</name>
<comment type="function">
    <text evidence="1 4 5 6 8 9 11 13 14">Palmitoyltransferase that catalyzes the addition of palmitate onto various protein substrates and is involved in a variety of cellular processes (PubMed:15489887, PubMed:15603740, PubMed:24705354, PubMed:27911442, PubMed:28757145). Has no stringent fatty acid selectivity and in addition to palmitate can also transfer onto target proteins myristate from tetradecanoyl-CoA and stearate from octadecanoyl-CoA (By similarity). Palmitoyltransferase specific for a subset of neuronal proteins, including SNAP25, DLG4/PSD95, GAD2, SYT1 and HTT (PubMed:15489887, PubMed:15603740, PubMed:19139280, PubMed:28757145). Also palmitoylates neuronal protein GPM6A as well as SPRED1 and SPRED3 (PubMed:24705354). Could also play a role in axonogenesis through the regulation of NTRK1 and the downstream ERK1/ERK2 signaling cascade (By similarity). May be involved in the sorting or targeting of critical proteins involved in the initiating events of endocytosis at the plasma membrane (PubMed:12393793). May play a role in Mg(2+) transport (PubMed:18794299). Could also palmitoylate DNAJC5 and regulate its localization to the Golgi membrane (By similarity). Palmitoylates CASP6, thereby preventing its dimerization and subsequent activation (PubMed:27911442).</text>
</comment>
<comment type="catalytic activity">
    <reaction evidence="5 6 11 13 14">
        <text>L-cysteinyl-[protein] + hexadecanoyl-CoA = S-hexadecanoyl-L-cysteinyl-[protein] + CoA</text>
        <dbReference type="Rhea" id="RHEA:36683"/>
        <dbReference type="Rhea" id="RHEA-COMP:10131"/>
        <dbReference type="Rhea" id="RHEA-COMP:11032"/>
        <dbReference type="ChEBI" id="CHEBI:29950"/>
        <dbReference type="ChEBI" id="CHEBI:57287"/>
        <dbReference type="ChEBI" id="CHEBI:57379"/>
        <dbReference type="ChEBI" id="CHEBI:74151"/>
        <dbReference type="EC" id="2.3.1.225"/>
    </reaction>
</comment>
<comment type="catalytic activity">
    <reaction evidence="1">
        <text>L-cysteinyl-[protein] + tetradecanoyl-CoA = S-tetradecanoyl-L-cysteinyl-[protein] + CoA</text>
        <dbReference type="Rhea" id="RHEA:59736"/>
        <dbReference type="Rhea" id="RHEA-COMP:10131"/>
        <dbReference type="Rhea" id="RHEA-COMP:15433"/>
        <dbReference type="ChEBI" id="CHEBI:29950"/>
        <dbReference type="ChEBI" id="CHEBI:57287"/>
        <dbReference type="ChEBI" id="CHEBI:57385"/>
        <dbReference type="ChEBI" id="CHEBI:143199"/>
    </reaction>
    <physiologicalReaction direction="left-to-right" evidence="1">
        <dbReference type="Rhea" id="RHEA:59737"/>
    </physiologicalReaction>
</comment>
<comment type="catalytic activity">
    <reaction evidence="1">
        <text>L-cysteinyl-[protein] + octadecanoyl-CoA = S-octadecanoyl-L-cysteinyl-[protein] + CoA</text>
        <dbReference type="Rhea" id="RHEA:59740"/>
        <dbReference type="Rhea" id="RHEA-COMP:10131"/>
        <dbReference type="Rhea" id="RHEA-COMP:15434"/>
        <dbReference type="ChEBI" id="CHEBI:29950"/>
        <dbReference type="ChEBI" id="CHEBI:57287"/>
        <dbReference type="ChEBI" id="CHEBI:57394"/>
        <dbReference type="ChEBI" id="CHEBI:143200"/>
    </reaction>
    <physiologicalReaction direction="left-to-right" evidence="1">
        <dbReference type="Rhea" id="RHEA:59741"/>
    </physiologicalReaction>
</comment>
<comment type="subunit">
    <text evidence="1 4 11 12 14 15 16">Interacts (via ANK repeats) with numerous proteins (via the consensus sequence motif [VIAP]-[VIT]-x-x-Q-P) (PubMed:28882895). Interacts (via ANK repeats) with CLIP3 (PubMed:26198635, PubMed:28882895). Interacts (via ANK repeats) with HTT; this interaction is inversely correlated to the length of the polyglutamine tract added to the huntingtin protein in Huntington disease (PubMed:12393793, PubMed:26198635, PubMed:28757145, PubMed:28882895, PubMed:9700202). Interacts (via ANK repeats) with DNAJC5 (via C-terminus) (PubMed:28882895). Interacts (via ANK repeats) with MAP6 (PubMed:26198635). Interacts (via ANK repeats) with SNAP23 (PubMed:28882895). Interacts (via ANK repeats) with SNAP25 (PubMed:28757145, PubMed:28882895). Interacts (via ANK repeats) with EVL (PubMed:28882895). Interacts with SPRED1 and SPRED3 (PubMed:24705354). Interacts with GPM6A and OPTN (PubMed:24705354). May interact (via ANK repeats) with SPRED2 (By similarity). May interact with NTRK1; may regulate its localization and function (By similarity).</text>
</comment>
<comment type="interaction">
    <interactant intactId="EBI-524753">
        <id>Q8IUH5</id>
    </interactant>
    <interactant intactId="EBI-2818084">
        <id>Q7Z5R6</id>
        <label>APBB1IP</label>
    </interactant>
    <organismsDiffer>false</organismsDiffer>
    <experiments>2</experiments>
</comment>
<comment type="interaction">
    <interactant intactId="EBI-524753">
        <id>Q8IUH5</id>
    </interactant>
    <interactant intactId="EBI-2875816">
        <id>Q9NP61</id>
        <label>ARFGAP3</label>
    </interactant>
    <organismsDiffer>false</organismsDiffer>
    <experiments>2</experiments>
</comment>
<comment type="interaction">
    <interactant intactId="EBI-524753">
        <id>Q8IUH5</id>
    </interactant>
    <interactant intactId="EBI-1170906">
        <id>P15336</id>
        <label>ATF2</label>
    </interactant>
    <organismsDiffer>false</organismsDiffer>
    <experiments>3</experiments>
</comment>
<comment type="interaction">
    <interactant intactId="EBI-524753">
        <id>Q8IUH5</id>
    </interactant>
    <interactant intactId="EBI-9091996">
        <id>Q9UQB8-3</id>
        <label>BAIAP2</label>
    </interactant>
    <organismsDiffer>false</organismsDiffer>
    <experiments>3</experiments>
</comment>
<comment type="interaction">
    <interactant intactId="EBI-524753">
        <id>Q8IUH5</id>
    </interactant>
    <interactant intactId="EBI-9092016">
        <id>Q9UQB8-6</id>
        <label>BAIAP2</label>
    </interactant>
    <organismsDiffer>false</organismsDiffer>
    <experiments>2</experiments>
</comment>
<comment type="interaction">
    <interactant intactId="EBI-524753">
        <id>Q8IUH5</id>
    </interactant>
    <interactant intactId="EBI-1028956">
        <id>P17655</id>
        <label>CAPN2</label>
    </interactant>
    <organismsDiffer>false</organismsDiffer>
    <experiments>2</experiments>
</comment>
<comment type="interaction">
    <interactant intactId="EBI-524753">
        <id>Q8IUH5</id>
    </interactant>
    <interactant intactId="EBI-9091443">
        <id>Q96GN5-2</id>
        <label>CDCA7L</label>
    </interactant>
    <organismsDiffer>false</organismsDiffer>
    <experiments>2</experiments>
</comment>
<comment type="interaction">
    <interactant intactId="EBI-524753">
        <id>Q8IUH5</id>
    </interactant>
    <interactant intactId="EBI-9087876">
        <id>P48730-2</id>
        <label>CSNK1D</label>
    </interactant>
    <organismsDiffer>false</organismsDiffer>
    <experiments>3</experiments>
</comment>
<comment type="interaction">
    <interactant intactId="EBI-524753">
        <id>Q8IUH5</id>
    </interactant>
    <interactant intactId="EBI-4324577">
        <id>Q9H3Z4</id>
        <label>DNAJC5</label>
    </interactant>
    <organismsDiffer>false</organismsDiffer>
    <experiments>6</experiments>
</comment>
<comment type="interaction">
    <interactant intactId="EBI-524753">
        <id>Q8IUH5</id>
    </interactant>
    <interactant intactId="EBI-10968534">
        <id>P50570-2</id>
        <label>DNM2</label>
    </interactant>
    <organismsDiffer>false</organismsDiffer>
    <experiments>3</experiments>
</comment>
<comment type="interaction">
    <interactant intactId="EBI-524753">
        <id>Q8IUH5</id>
    </interactant>
    <interactant intactId="EBI-352162">
        <id>P68104</id>
        <label>EEF1A1</label>
    </interactant>
    <organismsDiffer>false</organismsDiffer>
    <experiments>2</experiments>
</comment>
<comment type="interaction">
    <interactant intactId="EBI-524753">
        <id>Q8IUH5</id>
    </interactant>
    <interactant intactId="EBI-347740">
        <id>P60228</id>
        <label>EIF3E</label>
    </interactant>
    <organismsDiffer>false</organismsDiffer>
    <experiments>2</experiments>
</comment>
<comment type="interaction">
    <interactant intactId="EBI-524753">
        <id>Q8IUH5</id>
    </interactant>
    <interactant intactId="EBI-6448852">
        <id>Q9UI08-2</id>
        <label>EVL</label>
    </interactant>
    <organismsDiffer>false</organismsDiffer>
    <experiments>2</experiments>
</comment>
<comment type="interaction">
    <interactant intactId="EBI-524753">
        <id>Q8IUH5</id>
    </interactant>
    <interactant intactId="EBI-720896">
        <id>Q49AJ0</id>
        <label>FAM135B</label>
    </interactant>
    <organismsDiffer>false</organismsDiffer>
    <experiments>2</experiments>
</comment>
<comment type="interaction">
    <interactant intactId="EBI-524753">
        <id>Q8IUH5</id>
    </interactant>
    <interactant intactId="EBI-396453">
        <id>Q9UHY8</id>
        <label>FEZ2</label>
    </interactant>
    <organismsDiffer>false</organismsDiffer>
    <experiments>4</experiments>
</comment>
<comment type="interaction">
    <interactant intactId="EBI-524753">
        <id>Q8IUH5</id>
    </interactant>
    <interactant intactId="EBI-11110431">
        <id>Q8TB36</id>
        <label>GDAP1</label>
    </interactant>
    <organismsDiffer>false</organismsDiffer>
    <experiments>3</experiments>
</comment>
<comment type="interaction">
    <interactant intactId="EBI-524753">
        <id>Q8IUH5</id>
    </interactant>
    <interactant intactId="EBI-618309">
        <id>Q08379</id>
        <label>GOLGA2</label>
    </interactant>
    <organismsDiffer>false</organismsDiffer>
    <experiments>3</experiments>
</comment>
<comment type="interaction">
    <interactant intactId="EBI-524753">
        <id>Q8IUH5</id>
    </interactant>
    <interactant intactId="EBI-4403434">
        <id>Q9H4A5</id>
        <label>GOLPH3L</label>
    </interactant>
    <organismsDiffer>false</organismsDiffer>
    <experiments>2</experiments>
</comment>
<comment type="interaction">
    <interactant intactId="EBI-524753">
        <id>Q8IUH5</id>
    </interactant>
    <interactant intactId="EBI-7187133">
        <id>P51674</id>
        <label>GPM6A</label>
    </interactant>
    <organismsDiffer>false</organismsDiffer>
    <experiments>5</experiments>
</comment>
<comment type="interaction">
    <interactant intactId="EBI-524753">
        <id>Q8IUH5</id>
    </interactant>
    <interactant intactId="EBI-1044067">
        <id>P49840</id>
        <label>GSK3A</label>
    </interactant>
    <organismsDiffer>false</organismsDiffer>
    <experiments>3</experiments>
</comment>
<comment type="interaction">
    <interactant intactId="EBI-524753">
        <id>Q8IUH5</id>
    </interactant>
    <interactant intactId="EBI-466029">
        <id>P42858</id>
        <label>HTT</label>
    </interactant>
    <organismsDiffer>false</organismsDiffer>
    <experiments>30</experiments>
</comment>
<comment type="interaction">
    <interactant intactId="EBI-524753">
        <id>Q8IUH5</id>
    </interactant>
    <interactant intactId="EBI-9091197">
        <id>Q8IY31-3</id>
        <label>IFT20</label>
    </interactant>
    <organismsDiffer>false</organismsDiffer>
    <experiments>3</experiments>
</comment>
<comment type="interaction">
    <interactant intactId="EBI-524753">
        <id>Q8IUH5</id>
    </interactant>
    <interactant intactId="EBI-725672">
        <id>Q9NWB7</id>
        <label>IFT57</label>
    </interactant>
    <organismsDiffer>false</organismsDiffer>
    <experiments>2</experiments>
</comment>
<comment type="interaction">
    <interactant intactId="EBI-524753">
        <id>Q8IUH5</id>
    </interactant>
    <interactant intactId="EBI-3915857">
        <id>O60259</id>
        <label>KLK8</label>
    </interactant>
    <organismsDiffer>false</organismsDiffer>
    <experiments>3</experiments>
</comment>
<comment type="interaction">
    <interactant intactId="EBI-524753">
        <id>Q8IUH5</id>
    </interactant>
    <interactant intactId="EBI-9088686">
        <id>Q14847-2</id>
        <label>LASP1</label>
    </interactant>
    <organismsDiffer>false</organismsDiffer>
    <experiments>3</experiments>
</comment>
<comment type="interaction">
    <interactant intactId="EBI-524753">
        <id>Q8IUH5</id>
    </interactant>
    <interactant intactId="EBI-9091423">
        <id>Q96CV9-2</id>
        <label>OPTN</label>
    </interactant>
    <organismsDiffer>false</organismsDiffer>
    <experiments>2</experiments>
</comment>
<comment type="interaction">
    <interactant intactId="EBI-524753">
        <id>Q8IUH5</id>
    </interactant>
    <interactant intactId="EBI-9090666">
        <id>Q08499-8</id>
        <label>PDE4D</label>
    </interactant>
    <organismsDiffer>false</organismsDiffer>
    <experiments>2</experiments>
</comment>
<comment type="interaction">
    <interactant intactId="EBI-524753">
        <id>Q8IUH5</id>
    </interactant>
    <interactant intactId="EBI-9087775">
        <id>O15530-4</id>
        <label>PDPK1</label>
    </interactant>
    <organismsDiffer>false</organismsDiffer>
    <experiments>3</experiments>
</comment>
<comment type="interaction">
    <interactant intactId="EBI-524753">
        <id>Q8IUH5</id>
    </interactant>
    <interactant intactId="EBI-9090282">
        <id>P27986-2</id>
        <label>PIK3R1</label>
    </interactant>
    <organismsDiffer>false</organismsDiffer>
    <experiments>2</experiments>
</comment>
<comment type="interaction">
    <interactant intactId="EBI-524753">
        <id>Q8IUH5</id>
    </interactant>
    <interactant intactId="EBI-9089825">
        <id>Q9UF11-4</id>
        <label>PLEKHB1</label>
    </interactant>
    <organismsDiffer>false</organismsDiffer>
    <experiments>4</experiments>
</comment>
<comment type="interaction">
    <interactant intactId="EBI-524753">
        <id>Q8IUH5</id>
    </interactant>
    <interactant intactId="EBI-968374">
        <id>Q16537</id>
        <label>PPP2R5E</label>
    </interactant>
    <organismsDiffer>false</organismsDiffer>
    <experiments>2</experiments>
</comment>
<comment type="interaction">
    <interactant intactId="EBI-524753">
        <id>Q8IUH5</id>
    </interactant>
    <interactant intactId="EBI-9089467">
        <id>Q96DA2</id>
        <label>RAB39B</label>
    </interactant>
    <organismsDiffer>false</organismsDiffer>
    <experiments>3</experiments>
</comment>
<comment type="interaction">
    <interactant intactId="EBI-524753">
        <id>Q8IUH5</id>
    </interactant>
    <interactant intactId="EBI-25839575">
        <id>Q8WZ73-3</id>
        <label>RFFL</label>
    </interactant>
    <organismsDiffer>false</organismsDiffer>
    <experiments>3</experiments>
</comment>
<comment type="interaction">
    <interactant intactId="EBI-524753">
        <id>Q8IUH5</id>
    </interactant>
    <interactant intactId="EBI-9090795">
        <id>Q15047-2</id>
        <label>SETDB1</label>
    </interactant>
    <organismsDiffer>false</organismsDiffer>
    <experiments>3</experiments>
</comment>
<comment type="interaction">
    <interactant intactId="EBI-524753">
        <id>Q8IUH5</id>
    </interactant>
    <interactant intactId="EBI-9092184">
        <id>Q8IVB4</id>
        <label>SLC9A9</label>
    </interactant>
    <organismsDiffer>false</organismsDiffer>
    <experiments>2</experiments>
</comment>
<comment type="interaction">
    <interactant intactId="EBI-524753">
        <id>Q8IUH5</id>
    </interactant>
    <interactant intactId="EBI-745000">
        <id>O00161</id>
        <label>SNAP23</label>
    </interactant>
    <organismsDiffer>false</organismsDiffer>
    <experiments>4</experiments>
</comment>
<comment type="interaction">
    <interactant intactId="EBI-524753">
        <id>Q8IUH5</id>
    </interactant>
    <interactant intactId="EBI-524785">
        <id>P60880</id>
        <label>SNAP25</label>
    </interactant>
    <organismsDiffer>false</organismsDiffer>
    <experiments>3</experiments>
</comment>
<comment type="interaction">
    <interactant intactId="EBI-524753">
        <id>Q8IUH5</id>
    </interactant>
    <interactant intactId="EBI-5235340">
        <id>Q7Z699</id>
        <label>SPRED1</label>
    </interactant>
    <organismsDiffer>false</organismsDiffer>
    <experiments>3</experiments>
</comment>
<comment type="interaction">
    <interactant intactId="EBI-524753">
        <id>Q8IUH5</id>
    </interactant>
    <interactant intactId="EBI-7082156">
        <id>Q7Z698</id>
        <label>SPRED2</label>
    </interactant>
    <organismsDiffer>false</organismsDiffer>
    <experiments>4</experiments>
</comment>
<comment type="interaction">
    <interactant intactId="EBI-524753">
        <id>Q8IUH5</id>
    </interactant>
    <interactant intactId="EBI-742487">
        <id>O43597</id>
        <label>SPRY2</label>
    </interactant>
    <organismsDiffer>false</organismsDiffer>
    <experiments>4</experiments>
</comment>
<comment type="interaction">
    <interactant intactId="EBI-524753">
        <id>Q8IUH5</id>
    </interactant>
    <interactant intactId="EBI-12290641">
        <id>O43610</id>
        <label>SPRY3</label>
    </interactant>
    <organismsDiffer>false</organismsDiffer>
    <experiments>3</experiments>
</comment>
<comment type="interaction">
    <interactant intactId="EBI-524753">
        <id>Q8IUH5</id>
    </interactant>
    <interactant intactId="EBI-354861">
        <id>Q9C004</id>
        <label>SPRY4</label>
    </interactant>
    <organismsDiffer>false</organismsDiffer>
    <experiments>2</experiments>
</comment>
<comment type="interaction">
    <interactant intactId="EBI-524753">
        <id>Q8IUH5</id>
    </interactant>
    <interactant intactId="EBI-2511075">
        <id>Q8NFA0</id>
        <label>USP32</label>
    </interactant>
    <organismsDiffer>false</organismsDiffer>
    <experiments>2</experiments>
</comment>
<comment type="interaction">
    <interactant intactId="EBI-524753">
        <id>Q8IUH5</id>
    </interactant>
    <interactant intactId="EBI-4290615">
        <id>Q9Y6W5</id>
        <label>WASF2</label>
    </interactant>
    <organismsDiffer>false</organismsDiffer>
    <experiments>2</experiments>
</comment>
<comment type="interaction">
    <interactant intactId="EBI-524753">
        <id>Q8IUH5</id>
    </interactant>
    <interactant intactId="EBI-720609">
        <id>O76024</id>
        <label>WFS1</label>
    </interactant>
    <organismsDiffer>false</organismsDiffer>
    <experiments>3</experiments>
</comment>
<comment type="interaction">
    <interactant intactId="EBI-524753">
        <id>Q8IUH5</id>
    </interactant>
    <interactant intactId="EBI-524753">
        <id>Q8IUH5</id>
        <label>ZDHHC17</label>
    </interactant>
    <organismsDiffer>false</organismsDiffer>
    <experiments>6</experiments>
</comment>
<comment type="interaction">
    <interactant intactId="EBI-524753">
        <id>Q8IUH5</id>
    </interactant>
    <interactant intactId="EBI-25830993">
        <id>Q96EF9</id>
        <label>ZHX1-C8orf76</label>
    </interactant>
    <organismsDiffer>false</organismsDiffer>
    <experiments>3</experiments>
</comment>
<comment type="interaction">
    <interactant intactId="EBI-524753">
        <id>Q8IUH5</id>
    </interactant>
    <interactant intactId="EBI-9088990">
        <id>Q7Z783</id>
    </interactant>
    <organismsDiffer>false</organismsDiffer>
    <experiments>3</experiments>
</comment>
<comment type="subcellular location">
    <subcellularLocation>
        <location evidence="6 8">Golgi apparatus membrane</location>
        <topology evidence="2">Multi-pass membrane protein</topology>
    </subcellularLocation>
    <subcellularLocation>
        <location evidence="8">Cytoplasmic vesicle membrane</location>
        <topology evidence="2">Multi-pass membrane protein</topology>
    </subcellularLocation>
    <subcellularLocation>
        <location evidence="7">Presynaptic cell membrane</location>
        <topology evidence="2">Multi-pass membrane protein</topology>
    </subcellularLocation>
    <text evidence="8">Low extracellular Mg(2+) induces increase in Golgi and in post-Golgi membrane vesicles.</text>
</comment>
<comment type="alternative products">
    <event type="alternative splicing"/>
    <isoform>
        <id>Q8IUH5-1</id>
        <name>1</name>
        <sequence type="displayed"/>
    </isoform>
    <isoform>
        <id>Q8IUH5-2</id>
        <name>2</name>
        <sequence type="described" ref="VSP_010021 VSP_010022 VSP_010024 VSP_010025"/>
    </isoform>
    <isoform>
        <id>Q8IUH5-3</id>
        <name>3</name>
        <sequence type="described" ref="VSP_010023"/>
    </isoform>
</comment>
<comment type="tissue specificity">
    <text evidence="4">Expressed in all brain regions. Expression is highest in the cortex, cerebellum, occipital lobe and caudate and lowest in the spinal cord. Expression is also seen in testis, pancreas, heart and kidney.</text>
</comment>
<comment type="domain">
    <text evidence="6">The DHHC domain is required for palmitoyltransferase activity.</text>
</comment>
<comment type="PTM">
    <text evidence="6 8">Autopalmitoylated (PubMed:15603740, PubMed:18794299). Autopalmitoylation has a regulatory role in ZDHHC17-mediated Mg(2+) transport (PubMed:18794299).</text>
</comment>
<comment type="similarity">
    <text evidence="25">Belongs to the DHHC palmitoyltransferase family. AKR/ZDHHC17 subfamily.</text>
</comment>
<comment type="caution">
    <text evidence="10 30">Thought to palmitoylate MPP1 (PubMed:22496366). This work was later retracted due to image manipulation.</text>
</comment>
<comment type="sequence caution" evidence="25">
    <conflict type="frameshift">
        <sequence resource="EMBL-CDS" id="AAF28972"/>
    </conflict>
</comment>
<comment type="sequence caution" evidence="25">
    <conflict type="erroneous initiation">
        <sequence resource="EMBL-CDS" id="AAH30990"/>
    </conflict>
    <text>Extended N-terminus.</text>
</comment>
<comment type="sequence caution" evidence="25">
    <conflict type="erroneous initiation">
        <sequence resource="EMBL-CDS" id="BAA76790"/>
    </conflict>
    <text>Extended N-terminus.</text>
</comment>
<comment type="sequence caution" evidence="25">
    <conflict type="erroneous initiation">
        <sequence resource="EMBL-CDS" id="BAC77366"/>
    </conflict>
    <text>Truncated N-terminus.</text>
</comment>
<comment type="sequence caution" evidence="25">
    <conflict type="erroneous initiation">
        <sequence resource="EMBL-CDS" id="BAC77388"/>
    </conflict>
    <text>Truncated N-terminus.</text>
</comment>
<protein>
    <recommendedName>
        <fullName evidence="25">Palmitoyltransferase ZDHHC17</fullName>
        <ecNumber evidence="5 6 11 13 14">2.3.1.225</ecNumber>
    </recommendedName>
    <alternativeName>
        <fullName evidence="1">Acyltransferase ZDHHC17</fullName>
        <ecNumber evidence="1">2.3.1.-</ecNumber>
    </alternativeName>
    <alternativeName>
        <fullName evidence="29">DHHC domain-containing cysteine-rich protein 17</fullName>
        <shortName evidence="22">DHHC17</shortName>
    </alternativeName>
    <alternativeName>
        <fullName evidence="23">Huntingtin yeast partner H</fullName>
    </alternativeName>
    <alternativeName>
        <fullName evidence="20">Huntingtin-interacting protein 14</fullName>
        <shortName evidence="20">HIP-14</shortName>
    </alternativeName>
    <alternativeName>
        <fullName evidence="33">Huntingtin-interacting protein 3</fullName>
        <shortName evidence="33">HIP-3</shortName>
    </alternativeName>
    <alternativeName>
        <fullName evidence="23">Huntingtin-interacting protein H</fullName>
    </alternativeName>
    <alternativeName>
        <fullName evidence="26">Putative MAPK-activating protein PM11</fullName>
    </alternativeName>
    <alternativeName>
        <fullName evidence="26">Putative NF-kappa-B-activating protein 205</fullName>
    </alternativeName>
    <alternativeName>
        <fullName evidence="34">Zinc finger DHHC domain-containing protein 17</fullName>
    </alternativeName>
</protein>
<evidence type="ECO:0000250" key="1">
    <source>
        <dbReference type="UniProtKB" id="Q80TN5"/>
    </source>
</evidence>
<evidence type="ECO:0000255" key="2"/>
<evidence type="ECO:0000255" key="3">
    <source>
        <dbReference type="PROSITE-ProRule" id="PRU00067"/>
    </source>
</evidence>
<evidence type="ECO:0000269" key="4">
    <source>
    </source>
</evidence>
<evidence type="ECO:0000269" key="5">
    <source>
    </source>
</evidence>
<evidence type="ECO:0000269" key="6">
    <source>
    </source>
</evidence>
<evidence type="ECO:0000269" key="7">
    <source>
    </source>
</evidence>
<evidence type="ECO:0000269" key="8">
    <source>
    </source>
</evidence>
<evidence type="ECO:0000269" key="9">
    <source>
    </source>
</evidence>
<evidence type="ECO:0000269" key="10">
    <source>
    </source>
</evidence>
<evidence type="ECO:0000269" key="11">
    <source>
    </source>
</evidence>
<evidence type="ECO:0000269" key="12">
    <source>
    </source>
</evidence>
<evidence type="ECO:0000269" key="13">
    <source>
    </source>
</evidence>
<evidence type="ECO:0000269" key="14">
    <source>
    </source>
</evidence>
<evidence type="ECO:0000269" key="15">
    <source>
    </source>
</evidence>
<evidence type="ECO:0000269" key="16">
    <source>
    </source>
</evidence>
<evidence type="ECO:0000303" key="17">
    <source>
    </source>
</evidence>
<evidence type="ECO:0000303" key="18">
    <source>
    </source>
</evidence>
<evidence type="ECO:0000303" key="19">
    <source>
    </source>
</evidence>
<evidence type="ECO:0000303" key="20">
    <source>
    </source>
</evidence>
<evidence type="ECO:0000303" key="21">
    <source>
    </source>
</evidence>
<evidence type="ECO:0000303" key="22">
    <source>
    </source>
</evidence>
<evidence type="ECO:0000303" key="23">
    <source>
    </source>
</evidence>
<evidence type="ECO:0000303" key="24">
    <source ref="7"/>
</evidence>
<evidence type="ECO:0000305" key="25"/>
<evidence type="ECO:0000305" key="26">
    <source>
    </source>
</evidence>
<evidence type="ECO:0000305" key="27">
    <source>
    </source>
</evidence>
<evidence type="ECO:0000305" key="28">
    <source>
    </source>
</evidence>
<evidence type="ECO:0000305" key="29">
    <source>
    </source>
</evidence>
<evidence type="ECO:0000305" key="30">
    <source>
    </source>
</evidence>
<evidence type="ECO:0000312" key="31">
    <source>
        <dbReference type="EMBL" id="AAC26848.1"/>
    </source>
</evidence>
<evidence type="ECO:0000312" key="32">
    <source>
        <dbReference type="EMBL" id="BAA76790.1"/>
    </source>
</evidence>
<evidence type="ECO:0000312" key="33">
    <source>
        <dbReference type="EMBL" id="BAC22089.1"/>
    </source>
</evidence>
<evidence type="ECO:0000312" key="34">
    <source>
        <dbReference type="HGNC" id="HGNC:18412"/>
    </source>
</evidence>
<evidence type="ECO:0007744" key="35">
    <source>
        <dbReference type="PDB" id="5W7I"/>
    </source>
</evidence>
<evidence type="ECO:0007744" key="36">
    <source>
        <dbReference type="PDB" id="5W7J"/>
    </source>
</evidence>
<evidence type="ECO:0007829" key="37">
    <source>
        <dbReference type="PDB" id="3EU9"/>
    </source>
</evidence>
<sequence length="632" mass="72640">MQREEGFNTKMADGPDEYDTEAGCVPLLHPEEIKPQSHYNHGYGEPLGRKTHIDDYSTWDIVKATQYGIYERCRELVEAGYDVRQPDKENVTLLHWAAINNRIDLVKYYISKGAIVDQLGGDLNSTPLHWATRQGHLSMVVQLMKYGADPSLIDGEGCSCIHLAAQFGHTSIVAYLIAKGQDVDMMDQNGMTPLMWAAYRTHSVDPTRLLLTFNVSVNLGDKYHKNTALHWAVLAGNTTVISLLLEAGANVDAQNIKGESALDLAKQRKNVWMINHLQEARQAKGYDNPSFLRKLKADKEFRQKVMLGTPFLVIWLVGFIADLNIDSWLIKGLMYGGVWATVQFLSKSFFDHSMHSALPLGIYLATKFWMYVTWFFWFWNDLNFLFIHLPFLANSVALFYNFGKSWKSDPGIIKATEEQKKKTIVELAETGSLDLSIFCSTCLIRKPVRSKHCGVCNRCIAKFDHHCPWVGNCVGAGNHRYFMGYLFFLLFMICWMIYGCISYWGLHCETTYTKDGFWTYITQIATCSPWMFWMFLNSVFHFMWVAVLLMCQMYQISCLGITTNERMNARRYKHFKVTTTSIESPFNHGCVRNIIDFFEFRCCGLFRPVIVDWTRQYTIEYDQISGSGYQLV</sequence>
<reference key="1">
    <citation type="journal article" date="2002" name="Hum. Mol. Genet.">
        <title>HIP14, a novel ankyrin domain-containing protein, links huntingtin to intracellular trafficking and endocytosis.</title>
        <authorList>
            <person name="Singaraja R.R."/>
            <person name="Hadano S."/>
            <person name="Metzler M."/>
            <person name="Givan S."/>
            <person name="Wellington C.L."/>
            <person name="Warby S."/>
            <person name="Yanai A."/>
            <person name="Gutekunst C.-A."/>
            <person name="Leavitt B.R."/>
            <person name="Yi H."/>
            <person name="Fichter K."/>
            <person name="Gan L."/>
            <person name="McGutcheon K."/>
            <person name="Chopra V."/>
            <person name="Michel J."/>
            <person name="Hersch S.M."/>
            <person name="Ikeda J.E."/>
            <person name="Hayden M.R."/>
        </authorList>
    </citation>
    <scope>NUCLEOTIDE SEQUENCE [MRNA] (ISOFORM 1)</scope>
    <scope>INTERACTION WITH HTT</scope>
    <scope>TISSUE SPECIFICITY</scope>
    <scope>FUNCTION</scope>
    <source>
        <tissue>Brain</tissue>
    </source>
</reference>
<reference key="2">
    <citation type="journal article" date="1999" name="DNA Res.">
        <title>Prediction of the coding sequences of unidentified human genes. XIII. The complete sequences of 100 new cDNA clones from brain which code for large proteins in vitro.</title>
        <authorList>
            <person name="Nagase T."/>
            <person name="Ishikawa K."/>
            <person name="Suyama M."/>
            <person name="Kikuno R."/>
            <person name="Hirosawa M."/>
            <person name="Miyajima N."/>
            <person name="Tanaka A."/>
            <person name="Kotani H."/>
            <person name="Nomura N."/>
            <person name="Ohara O."/>
        </authorList>
    </citation>
    <scope>NUCLEOTIDE SEQUENCE [LARGE SCALE MRNA] (ISOFORM 1)</scope>
    <source>
        <tissue>Brain</tissue>
    </source>
</reference>
<reference key="3">
    <citation type="journal article" date="2003" name="Oncogene">
        <title>Large-scale identification and characterization of human genes that activate NF-kappaB and MAPK signaling pathways.</title>
        <authorList>
            <person name="Matsuda A."/>
            <person name="Suzuki Y."/>
            <person name="Honda G."/>
            <person name="Muramatsu S."/>
            <person name="Matsuzaki O."/>
            <person name="Nagano Y."/>
            <person name="Doi T."/>
            <person name="Shimotohno K."/>
            <person name="Harada T."/>
            <person name="Nishida E."/>
            <person name="Hayashi H."/>
            <person name="Sugano S."/>
        </authorList>
    </citation>
    <scope>NUCLEOTIDE SEQUENCE [LARGE SCALE MRNA] (ISOFORM 1)</scope>
    <source>
        <tissue>Lung fibroblast</tissue>
    </source>
</reference>
<reference key="4">
    <citation type="journal article" date="2004" name="Nat. Genet.">
        <title>Complete sequencing and characterization of 21,243 full-length human cDNAs.</title>
        <authorList>
            <person name="Ota T."/>
            <person name="Suzuki Y."/>
            <person name="Nishikawa T."/>
            <person name="Otsuki T."/>
            <person name="Sugiyama T."/>
            <person name="Irie R."/>
            <person name="Wakamatsu A."/>
            <person name="Hayashi K."/>
            <person name="Sato H."/>
            <person name="Nagai K."/>
            <person name="Kimura K."/>
            <person name="Makita H."/>
            <person name="Sekine M."/>
            <person name="Obayashi M."/>
            <person name="Nishi T."/>
            <person name="Shibahara T."/>
            <person name="Tanaka T."/>
            <person name="Ishii S."/>
            <person name="Yamamoto J."/>
            <person name="Saito K."/>
            <person name="Kawai Y."/>
            <person name="Isono Y."/>
            <person name="Nakamura Y."/>
            <person name="Nagahari K."/>
            <person name="Murakami K."/>
            <person name="Yasuda T."/>
            <person name="Iwayanagi T."/>
            <person name="Wagatsuma M."/>
            <person name="Shiratori A."/>
            <person name="Sudo H."/>
            <person name="Hosoiri T."/>
            <person name="Kaku Y."/>
            <person name="Kodaira H."/>
            <person name="Kondo H."/>
            <person name="Sugawara M."/>
            <person name="Takahashi M."/>
            <person name="Kanda K."/>
            <person name="Yokoi T."/>
            <person name="Furuya T."/>
            <person name="Kikkawa E."/>
            <person name="Omura Y."/>
            <person name="Abe K."/>
            <person name="Kamihara K."/>
            <person name="Katsuta N."/>
            <person name="Sato K."/>
            <person name="Tanikawa M."/>
            <person name="Yamazaki M."/>
            <person name="Ninomiya K."/>
            <person name="Ishibashi T."/>
            <person name="Yamashita H."/>
            <person name="Murakawa K."/>
            <person name="Fujimori K."/>
            <person name="Tanai H."/>
            <person name="Kimata M."/>
            <person name="Watanabe M."/>
            <person name="Hiraoka S."/>
            <person name="Chiba Y."/>
            <person name="Ishida S."/>
            <person name="Ono Y."/>
            <person name="Takiguchi S."/>
            <person name="Watanabe S."/>
            <person name="Yosida M."/>
            <person name="Hotuta T."/>
            <person name="Kusano J."/>
            <person name="Kanehori K."/>
            <person name="Takahashi-Fujii A."/>
            <person name="Hara H."/>
            <person name="Tanase T.-O."/>
            <person name="Nomura Y."/>
            <person name="Togiya S."/>
            <person name="Komai F."/>
            <person name="Hara R."/>
            <person name="Takeuchi K."/>
            <person name="Arita M."/>
            <person name="Imose N."/>
            <person name="Musashino K."/>
            <person name="Yuuki H."/>
            <person name="Oshima A."/>
            <person name="Sasaki N."/>
            <person name="Aotsuka S."/>
            <person name="Yoshikawa Y."/>
            <person name="Matsunawa H."/>
            <person name="Ichihara T."/>
            <person name="Shiohata N."/>
            <person name="Sano S."/>
            <person name="Moriya S."/>
            <person name="Momiyama H."/>
            <person name="Satoh N."/>
            <person name="Takami S."/>
            <person name="Terashima Y."/>
            <person name="Suzuki O."/>
            <person name="Nakagawa S."/>
            <person name="Senoh A."/>
            <person name="Mizoguchi H."/>
            <person name="Goto Y."/>
            <person name="Shimizu F."/>
            <person name="Wakebe H."/>
            <person name="Hishigaki H."/>
            <person name="Watanabe T."/>
            <person name="Sugiyama A."/>
            <person name="Takemoto M."/>
            <person name="Kawakami B."/>
            <person name="Yamazaki M."/>
            <person name="Watanabe K."/>
            <person name="Kumagai A."/>
            <person name="Itakura S."/>
            <person name="Fukuzumi Y."/>
            <person name="Fujimori Y."/>
            <person name="Komiyama M."/>
            <person name="Tashiro H."/>
            <person name="Tanigami A."/>
            <person name="Fujiwara T."/>
            <person name="Ono T."/>
            <person name="Yamada K."/>
            <person name="Fujii Y."/>
            <person name="Ozaki K."/>
            <person name="Hirao M."/>
            <person name="Ohmori Y."/>
            <person name="Kawabata A."/>
            <person name="Hikiji T."/>
            <person name="Kobatake N."/>
            <person name="Inagaki H."/>
            <person name="Ikema Y."/>
            <person name="Okamoto S."/>
            <person name="Okitani R."/>
            <person name="Kawakami T."/>
            <person name="Noguchi S."/>
            <person name="Itoh T."/>
            <person name="Shigeta K."/>
            <person name="Senba T."/>
            <person name="Matsumura K."/>
            <person name="Nakajima Y."/>
            <person name="Mizuno T."/>
            <person name="Morinaga M."/>
            <person name="Sasaki M."/>
            <person name="Togashi T."/>
            <person name="Oyama M."/>
            <person name="Hata H."/>
            <person name="Watanabe M."/>
            <person name="Komatsu T."/>
            <person name="Mizushima-Sugano J."/>
            <person name="Satoh T."/>
            <person name="Shirai Y."/>
            <person name="Takahashi Y."/>
            <person name="Nakagawa K."/>
            <person name="Okumura K."/>
            <person name="Nagase T."/>
            <person name="Nomura N."/>
            <person name="Kikuchi H."/>
            <person name="Masuho Y."/>
            <person name="Yamashita R."/>
            <person name="Nakai K."/>
            <person name="Yada T."/>
            <person name="Nakamura Y."/>
            <person name="Ohara O."/>
            <person name="Isogai T."/>
            <person name="Sugano S."/>
        </authorList>
    </citation>
    <scope>NUCLEOTIDE SEQUENCE [LARGE SCALE MRNA] (ISOFORM 2)</scope>
</reference>
<reference key="5">
    <citation type="journal article" date="2004" name="Genome Res.">
        <title>The status, quality, and expansion of the NIH full-length cDNA project: the Mammalian Gene Collection (MGC).</title>
        <authorList>
            <consortium name="The MGC Project Team"/>
        </authorList>
    </citation>
    <scope>NUCLEOTIDE SEQUENCE [LARGE SCALE MRNA] (ISOFORMS 1 AND 2)</scope>
    <source>
        <tissue>Bone marrow</tissue>
        <tissue>Testis</tissue>
    </source>
</reference>
<reference key="6">
    <citation type="journal article" date="1998" name="Hum. Mol. Genet.">
        <title>Huntingtin interacts with a family of WW domain proteins.</title>
        <authorList>
            <person name="Faber P.W."/>
            <person name="Barnes G.T."/>
            <person name="Srinidhi J."/>
            <person name="Chen J."/>
            <person name="Gusella J.F."/>
            <person name="MacDonald M.E."/>
        </authorList>
    </citation>
    <scope>NUCLEOTIDE SEQUENCE [MRNA] OF 3-182</scope>
    <scope>INTERACTION WITH HTT</scope>
    <source>
        <tissue>Testis</tissue>
    </source>
</reference>
<reference key="7">
    <citation type="submission" date="1999-05" db="EMBL/GenBank/DDBJ databases">
        <title>Human partial CDS from CD34+ stem cells.</title>
        <authorList>
            <person name="Ye M."/>
            <person name="Zhang Q.-H."/>
            <person name="Zhou J."/>
            <person name="Shen Y."/>
            <person name="Wu X.-Y."/>
            <person name="Guan Z.Q."/>
            <person name="Wang L."/>
            <person name="Fan H.-Y."/>
            <person name="Mao Y.-F."/>
            <person name="Dai M."/>
            <person name="Huang Q.-H."/>
            <person name="Chen S.-J."/>
            <person name="Chen Z."/>
        </authorList>
    </citation>
    <scope>NUCLEOTIDE SEQUENCE [LARGE SCALE MRNA] OF 3-203 (ISOFORM 3)</scope>
    <source>
        <tissue>Umbilical cord blood</tissue>
    </source>
</reference>
<reference key="8">
    <citation type="journal article" date="2004" name="Neuron">
        <title>Huntingtin-interacting protein HIP14 is a palmitoyl transferase involved in palmitoylation and trafficking of multiple neuronal proteins.</title>
        <authorList>
            <person name="Huang K."/>
            <person name="Yanai A."/>
            <person name="Kang R."/>
            <person name="Arstikaitis P."/>
            <person name="Singaraja R.R."/>
            <person name="Metzler M."/>
            <person name="Mullard A."/>
            <person name="Haigh B."/>
            <person name="Gauthier-Campbell C."/>
            <person name="Gutekunst C.-A."/>
            <person name="Hayden M.R."/>
            <person name="El-Husseini A."/>
        </authorList>
    </citation>
    <scope>FUNCTION</scope>
    <scope>CATALYTIC ACTIVITY</scope>
    <scope>DHHC DOMAIN</scope>
    <scope>SUBCELLULAR LOCATION</scope>
    <scope>AUTOPALMITOYLATION</scope>
</reference>
<reference key="9">
    <citation type="journal article" date="2004" name="Oncogene">
        <title>Huntingtin interacting protein 14 is an oncogenic human protein: palmitoyl acyltransferase.</title>
        <authorList>
            <person name="Ducker C.E."/>
            <person name="Stettler E.M."/>
            <person name="French K.J."/>
            <person name="Upson J.J."/>
            <person name="Smith C.D."/>
        </authorList>
    </citation>
    <scope>FUNCTION</scope>
    <scope>CATALYTIC ACTIVITY</scope>
    <scope>ACTIVE SITE</scope>
    <scope>MUTAGENESIS OF CYS-467</scope>
</reference>
<reference key="10">
    <citation type="journal article" date="2007" name="J. Neurosci.">
        <title>Drosophila huntingtin-interacting protein 14 is a presynaptic protein required for photoreceptor synaptic transmission and expression of the palmitoylated proteins synaptosome-associated protein 25 and cysteine string protein.</title>
        <authorList>
            <person name="Stowers R.S."/>
            <person name="Isacoff E.Y."/>
        </authorList>
    </citation>
    <scope>SUBCELLULAR LOCATION</scope>
</reference>
<reference key="11">
    <citation type="journal article" date="2008" name="J. Biol. Chem.">
        <title>Huntingtin-interacting proteins, HIP14 and HIP14L, mediate dual functions, palmitoyl acyltransferase and Mg2+ transport.</title>
        <authorList>
            <person name="Goytain A."/>
            <person name="Hines R.M."/>
            <person name="Quamme G.A."/>
        </authorList>
    </citation>
    <scope>FUNCTION</scope>
    <scope>SUBCELLULAR LOCATION</scope>
    <scope>AUTOPALMITOYLATION</scope>
</reference>
<reference key="12">
    <citation type="journal article" date="2009" name="Mol. Cell. Biol.">
        <title>ClipR-59 interacts with Akt and regulates Akt cellular compartmentalization.</title>
        <authorList>
            <person name="Ding J."/>
            <person name="Du K."/>
        </authorList>
    </citation>
    <scope>FUNCTION</scope>
</reference>
<reference key="13">
    <citation type="journal article" date="2012" name="J. Biol. Chem.">
        <title>Palmitoylation of MPP1 (membrane-palmitoylated protein 1)/p55 is crucial for lateral membrane organization in erythroid cells.</title>
        <authorList>
            <person name="Lach A."/>
            <person name="Grzybek M."/>
            <person name="Heger E."/>
            <person name="Korycka J."/>
            <person name="Wolny M."/>
            <person name="Kubiak J."/>
            <person name="Kolondra A."/>
            <person name="Boguslawska D.M."/>
            <person name="Augoff K."/>
            <person name="Majkowski M."/>
            <person name="Podkalicka J."/>
            <person name="Kaczor J."/>
            <person name="Stefanko A."/>
            <person name="Kuliczkowski K."/>
            <person name="Sikorski A.F."/>
        </authorList>
    </citation>
    <scope>RETRACTED PAPER</scope>
</reference>
<reference key="14">
    <citation type="journal article" date="2018" name="J. Biol. Chem.">
        <title>Palmitoylation of MPP1 (membrane-palmitoylated protein 1)/p55 is crucial for lateral membrane organization in erythroid cells.</title>
        <authorList>
            <person name="Lach A."/>
            <person name="Grzybek M."/>
            <person name="Heger E."/>
            <person name="Korycka J."/>
            <person name="Wolny M."/>
            <person name="Kubiak J."/>
            <person name="Kolondra A."/>
            <person name="Boguslawska D.M."/>
            <person name="Augoff K."/>
            <person name="Majkowski M."/>
            <person name="Podkalicka J."/>
            <person name="Kaczor J."/>
            <person name="Stefanko A."/>
            <person name="Kuliczkowski K."/>
            <person name="Sikorski A.F."/>
        </authorList>
    </citation>
    <scope>RETRACTION NOTICE OF PUBMED:22496366</scope>
</reference>
<reference key="15">
    <citation type="journal article" date="2014" name="BMC Bioinformatics">
        <title>Identifying tandem Ankyrin repeats in protein structures.</title>
        <authorList>
            <person name="Chakrabarty B."/>
            <person name="Parekh N."/>
        </authorList>
    </citation>
    <scope>ANKYRIN REPEATS</scope>
</reference>
<reference key="16">
    <citation type="journal article" date="2014" name="Hum. Mol. Genet.">
        <title>The palmitoyl acyltransferase HIP14 shares a high proportion of interactors with huntingtin: implications for a role in the pathogenesis of Huntington's disease.</title>
        <authorList>
            <person name="Butland S.L."/>
            <person name="Sanders S.S."/>
            <person name="Schmidt M.E."/>
            <person name="Riechers S.P."/>
            <person name="Lin D.T."/>
            <person name="Martin D.D."/>
            <person name="Vaid K."/>
            <person name="Graham R.K."/>
            <person name="Singaraja R.R."/>
            <person name="Wanker E.E."/>
            <person name="Conibear E."/>
            <person name="Hayden M.R."/>
        </authorList>
    </citation>
    <scope>FUNCTION</scope>
    <scope>CATALYTIC ACTIVITY</scope>
    <scope>INTERACTION WITH SPRED1; SPRED3; GPM6A AND OPTN</scope>
</reference>
<reference key="17">
    <citation type="journal article" date="2015" name="J. Biol. Chem.">
        <title>Identification of a novel sequence motif recognized by the ankyrin repeat domain of zDHHC17/13 S-acyltransferases.</title>
        <authorList>
            <person name="Lemonidis K."/>
            <person name="Sanchez-Perez M.C."/>
            <person name="Chamberlain L.H."/>
        </authorList>
    </citation>
    <scope>INTERACTION WITH CLIP3; HTT AND MAP6</scope>
</reference>
<reference key="18">
    <citation type="journal article" date="2017" name="Cell Death Differ.">
        <title>Palmitoylation of caspase-6 by HIP14 regulates its activation.</title>
        <authorList>
            <person name="Skotte N.H."/>
            <person name="Sanders S.S."/>
            <person name="Singaraja R.R."/>
            <person name="Ehrnhoefer D.E."/>
            <person name="Vaid K."/>
            <person name="Qiu X."/>
            <person name="Kannan S."/>
            <person name="Verma C."/>
            <person name="Hayden M.R."/>
        </authorList>
    </citation>
    <scope>FUNCTION</scope>
    <scope>CATALYTIC ACTIVITY</scope>
</reference>
<reference key="19">
    <citation type="journal article" date="2017" name="J. Biol. Chem.">
        <title>Peptide array based screening reveals a large number of proteins interacting with the ankyrin repeat domain of the zDHHC17 S-acyltransferase.</title>
        <authorList>
            <person name="Lemonidis K."/>
            <person name="MacLeod R."/>
            <person name="Baillie G.S."/>
            <person name="Chamberlain L.H."/>
        </authorList>
    </citation>
    <scope>SUBUNIT</scope>
    <scope>INTERACTION WITH SNAP23; SNAP25; HTT; CLIP3; DNAJC5 AND EVL</scope>
</reference>
<reference key="20">
    <citation type="journal article" date="2009" name="Proteins">
        <title>The ankyrin repeat domain of Huntingtin interacting protein 14 contains a surface aromatic cage, a potential site for methyl-lysine binding.</title>
        <authorList>
            <person name="Gao T."/>
            <person name="Collins R.E."/>
            <person name="Horton J.R."/>
            <person name="Zhang X."/>
            <person name="Zhang R."/>
            <person name="Dhayalan A."/>
            <person name="Tamas R."/>
            <person name="Jeltsch A."/>
            <person name="Cheng X."/>
        </authorList>
    </citation>
    <scope>X-RAY CRYSTALLOGRAPHY (1.99 ANGSTROMS) OF 51-288</scope>
    <scope>ANKYRIN REPEATS</scope>
</reference>
<reference evidence="35 36" key="21">
    <citation type="journal article" date="2017" name="Structure">
        <title>Structural basis for substrate recognition by the ankyrin repeat domain of human DHHC17 palmitoyltransferase.</title>
        <authorList>
            <person name="Verardi R."/>
            <person name="Kim J.S."/>
            <person name="Ghirlando R."/>
            <person name="Banerjee A."/>
        </authorList>
    </citation>
    <scope>X-RAY CRYSTALLOGRAPHY (2.10 ANGSTROMS) OF 50-284 OF WILD-TYPE AND MUTANT ALA-89 IN COMPLEX WITH SNAP25 PEPTIDE</scope>
    <scope>CATALYTIC ACTIVITY</scope>
    <scope>FUNCTION</scope>
    <scope>ANKYRIN REPEATS</scope>
    <scope>INTERACTION WITH SNAP25 AND HTT</scope>
    <scope>MUTAGENESIS OF TYR-67; GLU-89; ASN-100; ASP-122; TRP-130 AND CYS-467</scope>
    <scope>ACTIVE SITE</scope>
</reference>
<keyword id="KW-0002">3D-structure</keyword>
<keyword id="KW-0012">Acyltransferase</keyword>
<keyword id="KW-0025">Alternative splicing</keyword>
<keyword id="KW-0040">ANK repeat</keyword>
<keyword id="KW-1003">Cell membrane</keyword>
<keyword id="KW-0966">Cell projection</keyword>
<keyword id="KW-0968">Cytoplasmic vesicle</keyword>
<keyword id="KW-0333">Golgi apparatus</keyword>
<keyword id="KW-0449">Lipoprotein</keyword>
<keyword id="KW-0472">Membrane</keyword>
<keyword id="KW-0564">Palmitate</keyword>
<keyword id="KW-1267">Proteomics identification</keyword>
<keyword id="KW-1185">Reference proteome</keyword>
<keyword id="KW-0677">Repeat</keyword>
<keyword id="KW-0770">Synapse</keyword>
<keyword id="KW-0808">Transferase</keyword>
<keyword id="KW-0812">Transmembrane</keyword>
<keyword id="KW-1133">Transmembrane helix</keyword>
<keyword id="KW-0043">Tumor suppressor</keyword>
<proteinExistence type="evidence at protein level"/>
<accession>Q8IUH5</accession>
<accession>B4DR39</accession>
<accession>O75407</accession>
<accession>Q7Z2I0</accession>
<accession>Q86W89</accession>
<accession>Q86YK0</accession>
<accession>Q9P088</accession>
<accession>Q9UPZ8</accession>
<dbReference type="EC" id="2.3.1.225" evidence="5 6 11 13 14"/>
<dbReference type="EC" id="2.3.1.-" evidence="1"/>
<dbReference type="EMBL" id="AB024494">
    <property type="protein sequence ID" value="BAC22089.1"/>
    <property type="molecule type" value="mRNA"/>
</dbReference>
<dbReference type="EMBL" id="AB023163">
    <property type="protein sequence ID" value="BAA76790.1"/>
    <property type="status" value="ALT_INIT"/>
    <property type="molecule type" value="mRNA"/>
</dbReference>
<dbReference type="EMBL" id="AB097013">
    <property type="protein sequence ID" value="BAC77366.1"/>
    <property type="status" value="ALT_INIT"/>
    <property type="molecule type" value="mRNA"/>
</dbReference>
<dbReference type="EMBL" id="AB097035">
    <property type="protein sequence ID" value="BAC77388.1"/>
    <property type="status" value="ALT_INIT"/>
    <property type="molecule type" value="mRNA"/>
</dbReference>
<dbReference type="EMBL" id="AK299089">
    <property type="protein sequence ID" value="BAG61151.1"/>
    <property type="molecule type" value="mRNA"/>
</dbReference>
<dbReference type="EMBL" id="BC030990">
    <property type="protein sequence ID" value="AAH30990.1"/>
    <property type="status" value="ALT_INIT"/>
    <property type="molecule type" value="mRNA"/>
</dbReference>
<dbReference type="EMBL" id="BC050324">
    <property type="protein sequence ID" value="AAH50324.1"/>
    <property type="molecule type" value="mRNA"/>
</dbReference>
<dbReference type="EMBL" id="AF049612">
    <property type="protein sequence ID" value="AAC26848.1"/>
    <property type="molecule type" value="mRNA"/>
</dbReference>
<dbReference type="EMBL" id="AF161412">
    <property type="protein sequence ID" value="AAF28972.1"/>
    <property type="status" value="ALT_FRAME"/>
    <property type="molecule type" value="mRNA"/>
</dbReference>
<dbReference type="CCDS" id="CCDS44946.1">
    <molecule id="Q8IUH5-1"/>
</dbReference>
<dbReference type="RefSeq" id="NP_056151.2">
    <molecule id="Q8IUH5-1"/>
    <property type="nucleotide sequence ID" value="NM_015336.4"/>
</dbReference>
<dbReference type="PDB" id="3EU9">
    <property type="method" value="X-ray"/>
    <property type="resolution" value="1.99 A"/>
    <property type="chains" value="A/B/C=51-288"/>
</dbReference>
<dbReference type="PDB" id="5W7I">
    <property type="method" value="X-ray"/>
    <property type="resolution" value="2.10 A"/>
    <property type="chains" value="A/C=50-284"/>
</dbReference>
<dbReference type="PDB" id="5W7J">
    <property type="method" value="X-ray"/>
    <property type="resolution" value="2.20 A"/>
    <property type="chains" value="A/C=50-284"/>
</dbReference>
<dbReference type="PDBsum" id="3EU9"/>
<dbReference type="PDBsum" id="5W7I"/>
<dbReference type="PDBsum" id="5W7J"/>
<dbReference type="SMR" id="Q8IUH5"/>
<dbReference type="BioGRID" id="116965">
    <property type="interactions" value="299"/>
</dbReference>
<dbReference type="FunCoup" id="Q8IUH5">
    <property type="interactions" value="3221"/>
</dbReference>
<dbReference type="IntAct" id="Q8IUH5">
    <property type="interactions" value="275"/>
</dbReference>
<dbReference type="MINT" id="Q8IUH5"/>
<dbReference type="STRING" id="9606.ENSP00000403397"/>
<dbReference type="TCDB" id="8.A.114.1.1">
    <property type="family name" value="the huntington-interacting protein 14 (hip14) family"/>
</dbReference>
<dbReference type="iPTMnet" id="Q8IUH5"/>
<dbReference type="PhosphoSitePlus" id="Q8IUH5"/>
<dbReference type="SwissPalm" id="Q8IUH5"/>
<dbReference type="BioMuta" id="ZDHHC17"/>
<dbReference type="DMDM" id="46395885"/>
<dbReference type="jPOST" id="Q8IUH5"/>
<dbReference type="MassIVE" id="Q8IUH5"/>
<dbReference type="PaxDb" id="9606-ENSP00000403397"/>
<dbReference type="PeptideAtlas" id="Q8IUH5"/>
<dbReference type="ProteomicsDB" id="70572">
    <molecule id="Q8IUH5-1"/>
</dbReference>
<dbReference type="ProteomicsDB" id="70573">
    <molecule id="Q8IUH5-2"/>
</dbReference>
<dbReference type="ProteomicsDB" id="70574">
    <molecule id="Q8IUH5-3"/>
</dbReference>
<dbReference type="Pumba" id="Q8IUH5"/>
<dbReference type="Antibodypedia" id="8807">
    <property type="antibodies" value="195 antibodies from 34 providers"/>
</dbReference>
<dbReference type="DNASU" id="23390"/>
<dbReference type="Ensembl" id="ENST00000426126.7">
    <molecule id="Q8IUH5-1"/>
    <property type="protein sequence ID" value="ENSP00000403397.2"/>
    <property type="gene ID" value="ENSG00000186908.15"/>
</dbReference>
<dbReference type="GeneID" id="23390"/>
<dbReference type="KEGG" id="hsa:23390"/>
<dbReference type="MANE-Select" id="ENST00000426126.7">
    <property type="protein sequence ID" value="ENSP00000403397.2"/>
    <property type="RefSeq nucleotide sequence ID" value="NM_015336.4"/>
    <property type="RefSeq protein sequence ID" value="NP_056151.2"/>
</dbReference>
<dbReference type="UCSC" id="uc001syk.2">
    <molecule id="Q8IUH5-1"/>
    <property type="organism name" value="human"/>
</dbReference>
<dbReference type="AGR" id="HGNC:18412"/>
<dbReference type="CTD" id="23390"/>
<dbReference type="DisGeNET" id="23390"/>
<dbReference type="GeneCards" id="ZDHHC17"/>
<dbReference type="HGNC" id="HGNC:18412">
    <property type="gene designation" value="ZDHHC17"/>
</dbReference>
<dbReference type="HPA" id="ENSG00000186908">
    <property type="expression patterns" value="Low tissue specificity"/>
</dbReference>
<dbReference type="MIM" id="607799">
    <property type="type" value="gene"/>
</dbReference>
<dbReference type="neXtProt" id="NX_Q8IUH5"/>
<dbReference type="OpenTargets" id="ENSG00000186908"/>
<dbReference type="PharmGKB" id="PA134991292"/>
<dbReference type="VEuPathDB" id="HostDB:ENSG00000186908"/>
<dbReference type="eggNOG" id="KOG0509">
    <property type="taxonomic scope" value="Eukaryota"/>
</dbReference>
<dbReference type="GeneTree" id="ENSGT00530000063074"/>
<dbReference type="HOGENOM" id="CLU_012510_3_1_1"/>
<dbReference type="InParanoid" id="Q8IUH5"/>
<dbReference type="OMA" id="FWVGFRY"/>
<dbReference type="OrthoDB" id="6781668at2759"/>
<dbReference type="PAN-GO" id="Q8IUH5">
    <property type="GO annotations" value="3 GO annotations based on evolutionary models"/>
</dbReference>
<dbReference type="PhylomeDB" id="Q8IUH5"/>
<dbReference type="TreeFam" id="TF317342"/>
<dbReference type="BRENDA" id="2.3.1.225">
    <property type="organism ID" value="2681"/>
</dbReference>
<dbReference type="PathwayCommons" id="Q8IUH5"/>
<dbReference type="SignaLink" id="Q8IUH5"/>
<dbReference type="BioGRID-ORCS" id="23390">
    <property type="hits" value="71 hits in 1157 CRISPR screens"/>
</dbReference>
<dbReference type="ChiTaRS" id="ZDHHC17">
    <property type="organism name" value="human"/>
</dbReference>
<dbReference type="EvolutionaryTrace" id="Q8IUH5"/>
<dbReference type="GeneWiki" id="ZDHHC17"/>
<dbReference type="GenomeRNAi" id="23390"/>
<dbReference type="Pharos" id="Q8IUH5">
    <property type="development level" value="Tbio"/>
</dbReference>
<dbReference type="PRO" id="PR:Q8IUH5"/>
<dbReference type="Proteomes" id="UP000005640">
    <property type="component" value="Chromosome 12"/>
</dbReference>
<dbReference type="RNAct" id="Q8IUH5">
    <property type="molecule type" value="protein"/>
</dbReference>
<dbReference type="Bgee" id="ENSG00000186908">
    <property type="expression patterns" value="Expressed in corpus callosum and 218 other cell types or tissues"/>
</dbReference>
<dbReference type="ExpressionAtlas" id="Q8IUH5">
    <property type="expression patterns" value="baseline and differential"/>
</dbReference>
<dbReference type="GO" id="GO:0042995">
    <property type="term" value="C:cell projection"/>
    <property type="evidence" value="ECO:0007669"/>
    <property type="project" value="UniProtKB-KW"/>
</dbReference>
<dbReference type="GO" id="GO:0098978">
    <property type="term" value="C:glutamatergic synapse"/>
    <property type="evidence" value="ECO:0007669"/>
    <property type="project" value="Ensembl"/>
</dbReference>
<dbReference type="GO" id="GO:0005794">
    <property type="term" value="C:Golgi apparatus"/>
    <property type="evidence" value="ECO:0000314"/>
    <property type="project" value="HPA"/>
</dbReference>
<dbReference type="GO" id="GO:0000139">
    <property type="term" value="C:Golgi membrane"/>
    <property type="evidence" value="ECO:0000314"/>
    <property type="project" value="UniProtKB"/>
</dbReference>
<dbReference type="GO" id="GO:0030660">
    <property type="term" value="C:Golgi-associated vesicle membrane"/>
    <property type="evidence" value="ECO:0000314"/>
    <property type="project" value="UniProtKB"/>
</dbReference>
<dbReference type="GO" id="GO:0043231">
    <property type="term" value="C:intracellular membrane-bounded organelle"/>
    <property type="evidence" value="ECO:0000314"/>
    <property type="project" value="HPA"/>
</dbReference>
<dbReference type="GO" id="GO:0140240">
    <property type="term" value="C:perforant pathway to dendrate granule cell synapse"/>
    <property type="evidence" value="ECO:0007669"/>
    <property type="project" value="Ensembl"/>
</dbReference>
<dbReference type="GO" id="GO:0150051">
    <property type="term" value="C:postsynaptic Golgi apparatus"/>
    <property type="evidence" value="ECO:0007669"/>
    <property type="project" value="Ensembl"/>
</dbReference>
<dbReference type="GO" id="GO:0042734">
    <property type="term" value="C:presynaptic membrane"/>
    <property type="evidence" value="ECO:0007669"/>
    <property type="project" value="UniProtKB-SubCell"/>
</dbReference>
<dbReference type="GO" id="GO:0042802">
    <property type="term" value="F:identical protein binding"/>
    <property type="evidence" value="ECO:0000353"/>
    <property type="project" value="IntAct"/>
</dbReference>
<dbReference type="GO" id="GO:0016409">
    <property type="term" value="F:palmitoyltransferase activity"/>
    <property type="evidence" value="ECO:0000314"/>
    <property type="project" value="UniProtKB"/>
</dbReference>
<dbReference type="GO" id="GO:0019705">
    <property type="term" value="F:protein-cysteine S-myristoyltransferase activity"/>
    <property type="evidence" value="ECO:0007669"/>
    <property type="project" value="RHEA"/>
</dbReference>
<dbReference type="GO" id="GO:0019706">
    <property type="term" value="F:protein-cysteine S-palmitoyltransferase activity"/>
    <property type="evidence" value="ECO:0000314"/>
    <property type="project" value="UniProtKB"/>
</dbReference>
<dbReference type="GO" id="GO:0140439">
    <property type="term" value="F:protein-cysteine S-stearoyltransferase activity"/>
    <property type="evidence" value="ECO:0007669"/>
    <property type="project" value="RHEA"/>
</dbReference>
<dbReference type="GO" id="GO:0005102">
    <property type="term" value="F:signaling receptor binding"/>
    <property type="evidence" value="ECO:0007669"/>
    <property type="project" value="Ensembl"/>
</dbReference>
<dbReference type="GO" id="GO:0007409">
    <property type="term" value="P:axonogenesis"/>
    <property type="evidence" value="ECO:0000250"/>
    <property type="project" value="UniProtKB"/>
</dbReference>
<dbReference type="GO" id="GO:0042953">
    <property type="term" value="P:lipoprotein transport"/>
    <property type="evidence" value="ECO:0000314"/>
    <property type="project" value="UniProtKB"/>
</dbReference>
<dbReference type="GO" id="GO:0043123">
    <property type="term" value="P:positive regulation of canonical NF-kappaB signal transduction"/>
    <property type="evidence" value="ECO:0007001"/>
    <property type="project" value="UniProtKB"/>
</dbReference>
<dbReference type="GO" id="GO:0018345">
    <property type="term" value="P:protein palmitoylation"/>
    <property type="evidence" value="ECO:0000314"/>
    <property type="project" value="UniProtKB"/>
</dbReference>
<dbReference type="GO" id="GO:0070372">
    <property type="term" value="P:regulation of ERK1 and ERK2 cascade"/>
    <property type="evidence" value="ECO:0000250"/>
    <property type="project" value="UniProtKB"/>
</dbReference>
<dbReference type="GO" id="GO:0098987">
    <property type="term" value="P:regulation of modification of synapse structure, modulating synaptic transmission"/>
    <property type="evidence" value="ECO:0007669"/>
    <property type="project" value="Ensembl"/>
</dbReference>
<dbReference type="GO" id="GO:0051386">
    <property type="term" value="P:regulation of neurotrophin TRK receptor signaling pathway"/>
    <property type="evidence" value="ECO:0000250"/>
    <property type="project" value="UniProtKB"/>
</dbReference>
<dbReference type="GO" id="GO:0043067">
    <property type="term" value="P:regulation of programmed cell death"/>
    <property type="evidence" value="ECO:0000314"/>
    <property type="project" value="UniProt"/>
</dbReference>
<dbReference type="FunFam" id="1.25.40.20:FF:000035">
    <property type="entry name" value="Palmitoyltransferase"/>
    <property type="match status" value="1"/>
</dbReference>
<dbReference type="Gene3D" id="1.25.40.20">
    <property type="entry name" value="Ankyrin repeat-containing domain"/>
    <property type="match status" value="1"/>
</dbReference>
<dbReference type="InterPro" id="IPR002110">
    <property type="entry name" value="Ankyrin_rpt"/>
</dbReference>
<dbReference type="InterPro" id="IPR036770">
    <property type="entry name" value="Ankyrin_rpt-contain_sf"/>
</dbReference>
<dbReference type="InterPro" id="IPR001594">
    <property type="entry name" value="Palmitoyltrfase_DHHC"/>
</dbReference>
<dbReference type="PANTHER" id="PTHR24161">
    <property type="entry name" value="ANK_REP_REGION DOMAIN-CONTAINING PROTEIN-RELATED"/>
    <property type="match status" value="1"/>
</dbReference>
<dbReference type="PANTHER" id="PTHR24161:SF18">
    <property type="entry name" value="PALMITOYLTRANSFERASE ZDHHC17"/>
    <property type="match status" value="1"/>
</dbReference>
<dbReference type="Pfam" id="PF12796">
    <property type="entry name" value="Ank_2"/>
    <property type="match status" value="2"/>
</dbReference>
<dbReference type="Pfam" id="PF01529">
    <property type="entry name" value="DHHC"/>
    <property type="match status" value="1"/>
</dbReference>
<dbReference type="PRINTS" id="PR01415">
    <property type="entry name" value="ANKYRIN"/>
</dbReference>
<dbReference type="SMART" id="SM00248">
    <property type="entry name" value="ANK"/>
    <property type="match status" value="5"/>
</dbReference>
<dbReference type="SUPFAM" id="SSF48403">
    <property type="entry name" value="Ankyrin repeat"/>
    <property type="match status" value="1"/>
</dbReference>
<dbReference type="PROSITE" id="PS50297">
    <property type="entry name" value="ANK_REP_REGION"/>
    <property type="match status" value="1"/>
</dbReference>
<dbReference type="PROSITE" id="PS50088">
    <property type="entry name" value="ANK_REPEAT"/>
    <property type="match status" value="5"/>
</dbReference>
<dbReference type="PROSITE" id="PS50216">
    <property type="entry name" value="DHHC"/>
    <property type="match status" value="1"/>
</dbReference>
<gene>
    <name evidence="34" type="primary">ZDHHC17</name>
    <name evidence="17 21" type="synonym">HIP14</name>
    <name evidence="33" type="synonym">HIP3</name>
    <name evidence="23" type="synonym">HYPH</name>
    <name evidence="32" type="synonym">KIAA0946</name>
    <name evidence="31" type="ORF">HSPC294</name>
</gene>
<feature type="chain" id="PRO_0000212900" description="Palmitoyltransferase ZDHHC17">
    <location>
        <begin position="1"/>
        <end position="632"/>
    </location>
</feature>
<feature type="topological domain" description="Cytoplasmic" evidence="2">
    <location>
        <begin position="1"/>
        <end position="304"/>
    </location>
</feature>
<feature type="transmembrane region" description="Helical" evidence="2">
    <location>
        <begin position="305"/>
        <end position="325"/>
    </location>
</feature>
<feature type="transmembrane region" description="Helical" evidence="2">
    <location>
        <begin position="326"/>
        <end position="346"/>
    </location>
</feature>
<feature type="topological domain" description="Cytoplasmic" evidence="2">
    <location>
        <begin position="347"/>
        <end position="357"/>
    </location>
</feature>
<feature type="transmembrane region" description="Helical" evidence="2">
    <location>
        <begin position="358"/>
        <end position="378"/>
    </location>
</feature>
<feature type="topological domain" description="Lumenal" evidence="2">
    <location>
        <begin position="379"/>
        <end position="381"/>
    </location>
</feature>
<feature type="transmembrane region" description="Helical" evidence="2">
    <location>
        <begin position="382"/>
        <end position="402"/>
    </location>
</feature>
<feature type="topological domain" description="Cytoplasmic" evidence="2">
    <location>
        <begin position="403"/>
        <end position="480"/>
    </location>
</feature>
<feature type="transmembrane region" description="Helical" evidence="2">
    <location>
        <begin position="481"/>
        <end position="501"/>
    </location>
</feature>
<feature type="topological domain" description="Lumenal" evidence="2">
    <location>
        <begin position="502"/>
        <end position="529"/>
    </location>
</feature>
<feature type="transmembrane region" description="Helical" evidence="2">
    <location>
        <begin position="530"/>
        <end position="550"/>
    </location>
</feature>
<feature type="topological domain" description="Cytoplasmic" evidence="2">
    <location>
        <begin position="551"/>
        <end position="632"/>
    </location>
</feature>
<feature type="repeat" description="ANK 1" evidence="28 29">
    <location>
        <begin position="51"/>
        <end position="86"/>
    </location>
</feature>
<feature type="repeat" description="ANK 2" evidence="2 29">
    <location>
        <begin position="89"/>
        <end position="118"/>
    </location>
</feature>
<feature type="repeat" description="ANK 3" evidence="2 29">
    <location>
        <begin position="123"/>
        <end position="152"/>
    </location>
</feature>
<feature type="repeat" description="ANK 4" evidence="2 29">
    <location>
        <begin position="156"/>
        <end position="185"/>
    </location>
</feature>
<feature type="repeat" description="ANK 5" evidence="2 29">
    <location>
        <begin position="189"/>
        <end position="219"/>
    </location>
</feature>
<feature type="repeat" description="ANK 6" evidence="2 29">
    <location>
        <begin position="224"/>
        <end position="253"/>
    </location>
</feature>
<feature type="repeat" description="ANK 7" evidence="2 29">
    <location>
        <begin position="257"/>
        <end position="286"/>
    </location>
</feature>
<feature type="domain" description="DHHC" evidence="3">
    <location>
        <begin position="437"/>
        <end position="487"/>
    </location>
</feature>
<feature type="region of interest" description="Necessary and sufficient for interaction with DNAJC5 and SNAP25" evidence="1">
    <location>
        <begin position="11"/>
        <end position="305"/>
    </location>
</feature>
<feature type="active site" description="S-palmitoyl cysteine intermediate" evidence="27 29">
    <location>
        <position position="467"/>
    </location>
</feature>
<feature type="splice variant" id="VSP_010021" description="In isoform 2." evidence="18 19">
    <location>
        <begin position="1"/>
        <end position="50"/>
    </location>
</feature>
<feature type="splice variant" id="VSP_010022" description="In isoform 2." evidence="18 19">
    <original>THIDDYSTWDIVKATQ</original>
    <variation>MSTIPKRAVCPFSTQR</variation>
    <location>
        <begin position="51"/>
        <end position="66"/>
    </location>
</feature>
<feature type="splice variant" id="VSP_010023" description="In isoform 3." evidence="24">
    <location>
        <begin position="204"/>
        <end position="632"/>
    </location>
</feature>
<feature type="splice variant" id="VSP_010024" description="In isoform 2." evidence="18 19">
    <original>GESALDLAK</original>
    <variation>AILRCHMAL</variation>
    <location>
        <begin position="258"/>
        <end position="266"/>
    </location>
</feature>
<feature type="splice variant" id="VSP_010025" description="In isoform 2." evidence="18 19">
    <location>
        <begin position="267"/>
        <end position="632"/>
    </location>
</feature>
<feature type="sequence variant" id="VAR_052978" description="In dbSNP:rs33996476.">
    <original>N</original>
    <variation>S</variation>
    <location>
        <position position="383"/>
    </location>
</feature>
<feature type="mutagenesis site" description="Decreased binding affinity for SNAP25." evidence="14">
    <original>Y</original>
    <variation>A</variation>
    <location>
        <position position="67"/>
    </location>
</feature>
<feature type="mutagenesis site" description="No effect on SNAP25 binding." evidence="14">
    <original>E</original>
    <variation>A</variation>
    <location>
        <position position="89"/>
    </location>
</feature>
<feature type="mutagenesis site" description="Abolishes SNAP25 binding." evidence="14">
    <original>N</original>
    <variation>A</variation>
    <location>
        <position position="100"/>
    </location>
</feature>
<feature type="mutagenesis site" description="Mildly decreased binding affinity for SNAP25." evidence="14">
    <original>D</original>
    <variation>A</variation>
    <location>
        <position position="122"/>
    </location>
</feature>
<feature type="mutagenesis site" description="Abolishes SNAP25 and HTT binding." evidence="14">
    <original>W</original>
    <variation>A</variation>
    <location>
        <position position="130"/>
    </location>
</feature>
<feature type="mutagenesis site" description="Abolishes palmitoyltransferase activity." evidence="5 14">
    <original>C</original>
    <variation>S</variation>
    <location>
        <position position="467"/>
    </location>
</feature>
<feature type="sequence conflict" description="In Ref. 7; AAF28972." evidence="25" ref="7">
    <original>R</original>
    <variation>G</variation>
    <location>
        <position position="3"/>
    </location>
</feature>
<feature type="sequence conflict" description="In Ref. 1; BAC22089." evidence="25" ref="1">
    <original>Y</original>
    <variation>F</variation>
    <location>
        <position position="39"/>
    </location>
</feature>
<feature type="sequence conflict" description="In Ref. 1; BAC22089." evidence="25" ref="1">
    <original>V</original>
    <variation>VV</variation>
    <location>
        <position position="173"/>
    </location>
</feature>
<feature type="sequence conflict" description="In Ref. 7; AAF28972." evidence="25" ref="7">
    <original>D</original>
    <variation>E</variation>
    <location>
        <position position="182"/>
    </location>
</feature>
<feature type="helix" evidence="37">
    <location>
        <begin position="56"/>
        <end position="58"/>
    </location>
</feature>
<feature type="helix" evidence="37">
    <location>
        <begin position="61"/>
        <end position="66"/>
    </location>
</feature>
<feature type="helix" evidence="37">
    <location>
        <begin position="70"/>
        <end position="78"/>
    </location>
</feature>
<feature type="helix" evidence="37">
    <location>
        <begin position="93"/>
        <end position="99"/>
    </location>
</feature>
<feature type="helix" evidence="37">
    <location>
        <begin position="103"/>
        <end position="111"/>
    </location>
</feature>
<feature type="turn" evidence="37">
    <location>
        <begin position="121"/>
        <end position="124"/>
    </location>
</feature>
<feature type="helix" evidence="37">
    <location>
        <begin position="127"/>
        <end position="134"/>
    </location>
</feature>
<feature type="helix" evidence="37">
    <location>
        <begin position="137"/>
        <end position="145"/>
    </location>
</feature>
<feature type="helix" evidence="37">
    <location>
        <begin position="160"/>
        <end position="166"/>
    </location>
</feature>
<feature type="helix" evidence="37">
    <location>
        <begin position="170"/>
        <end position="178"/>
    </location>
</feature>
<feature type="helix" evidence="37">
    <location>
        <begin position="193"/>
        <end position="200"/>
    </location>
</feature>
<feature type="helix" evidence="37">
    <location>
        <begin position="207"/>
        <end position="212"/>
    </location>
</feature>
<feature type="turn" evidence="37">
    <location>
        <begin position="222"/>
        <end position="224"/>
    </location>
</feature>
<feature type="helix" evidence="37">
    <location>
        <begin position="228"/>
        <end position="235"/>
    </location>
</feature>
<feature type="helix" evidence="37">
    <location>
        <begin position="238"/>
        <end position="247"/>
    </location>
</feature>
<feature type="helix" evidence="37">
    <location>
        <begin position="261"/>
        <end position="267"/>
    </location>
</feature>
<feature type="helix" evidence="37">
    <location>
        <begin position="271"/>
        <end position="280"/>
    </location>
</feature>